<evidence type="ECO:0000255" key="1">
    <source>
        <dbReference type="HAMAP-Rule" id="MF_00653"/>
    </source>
</evidence>
<dbReference type="EMBL" id="AE008923">
    <property type="protein sequence ID" value="AAM37959.1"/>
    <property type="molecule type" value="Genomic_DNA"/>
</dbReference>
<dbReference type="RefSeq" id="WP_011052045.1">
    <property type="nucleotide sequence ID" value="NC_003919.1"/>
</dbReference>
<dbReference type="SMR" id="Q8PHY4"/>
<dbReference type="GeneID" id="66912181"/>
<dbReference type="KEGG" id="xac:XAC3114"/>
<dbReference type="eggNOG" id="COG1235">
    <property type="taxonomic scope" value="Bacteria"/>
</dbReference>
<dbReference type="HOGENOM" id="CLU_061120_0_0_6"/>
<dbReference type="UniPathway" id="UPA00539"/>
<dbReference type="Proteomes" id="UP000000576">
    <property type="component" value="Chromosome"/>
</dbReference>
<dbReference type="GO" id="GO:0018189">
    <property type="term" value="P:pyrroloquinoline quinone biosynthetic process"/>
    <property type="evidence" value="ECO:0007669"/>
    <property type="project" value="UniProtKB-UniRule"/>
</dbReference>
<dbReference type="CDD" id="cd16274">
    <property type="entry name" value="PQQB-like_MBL-fold"/>
    <property type="match status" value="1"/>
</dbReference>
<dbReference type="Gene3D" id="3.60.15.10">
    <property type="entry name" value="Ribonuclease Z/Hydroxyacylglutathione hydrolase-like"/>
    <property type="match status" value="1"/>
</dbReference>
<dbReference type="HAMAP" id="MF_00653">
    <property type="entry name" value="PQQ_syn_PqqB"/>
    <property type="match status" value="1"/>
</dbReference>
<dbReference type="InterPro" id="IPR001279">
    <property type="entry name" value="Metallo-B-lactamas"/>
</dbReference>
<dbReference type="InterPro" id="IPR011842">
    <property type="entry name" value="PQQ_synth_PqqB"/>
</dbReference>
<dbReference type="InterPro" id="IPR036866">
    <property type="entry name" value="RibonucZ/Hydroxyglut_hydro"/>
</dbReference>
<dbReference type="NCBIfam" id="TIGR02108">
    <property type="entry name" value="PQQ_syn_pqqB"/>
    <property type="match status" value="1"/>
</dbReference>
<dbReference type="PANTHER" id="PTHR42663:SF7">
    <property type="entry name" value="COENZYME PQQ SYNTHESIS PROTEIN B"/>
    <property type="match status" value="1"/>
</dbReference>
<dbReference type="PANTHER" id="PTHR42663">
    <property type="entry name" value="HYDROLASE C777.06C-RELATED-RELATED"/>
    <property type="match status" value="1"/>
</dbReference>
<dbReference type="Pfam" id="PF12706">
    <property type="entry name" value="Lactamase_B_2"/>
    <property type="match status" value="1"/>
</dbReference>
<dbReference type="SUPFAM" id="SSF56281">
    <property type="entry name" value="Metallo-hydrolase/oxidoreductase"/>
    <property type="match status" value="1"/>
</dbReference>
<comment type="function">
    <text evidence="1">May be involved in the transport of PQQ or its precursor to the periplasm.</text>
</comment>
<comment type="pathway">
    <text evidence="1">Cofactor biosynthesis; pyrroloquinoline quinone biosynthesis.</text>
</comment>
<comment type="similarity">
    <text evidence="1">Belongs to the PqqB family.</text>
</comment>
<proteinExistence type="inferred from homology"/>
<keyword id="KW-0884">PQQ biosynthesis</keyword>
<keyword id="KW-0813">Transport</keyword>
<name>PQQB_XANAC</name>
<feature type="chain" id="PRO_0000220011" description="Coenzyme PQQ synthesis protein B">
    <location>
        <begin position="1"/>
        <end position="299"/>
    </location>
</feature>
<protein>
    <recommendedName>
        <fullName evidence="1">Coenzyme PQQ synthesis protein B</fullName>
    </recommendedName>
    <alternativeName>
        <fullName evidence="1">Pyrroloquinoline quinone biosynthesis protein B</fullName>
    </alternativeName>
</protein>
<organism>
    <name type="scientific">Xanthomonas axonopodis pv. citri (strain 306)</name>
    <dbReference type="NCBI Taxonomy" id="190486"/>
    <lineage>
        <taxon>Bacteria</taxon>
        <taxon>Pseudomonadati</taxon>
        <taxon>Pseudomonadota</taxon>
        <taxon>Gammaproteobacteria</taxon>
        <taxon>Lysobacterales</taxon>
        <taxon>Lysobacteraceae</taxon>
        <taxon>Xanthomonas</taxon>
    </lineage>
</organism>
<gene>
    <name evidence="1" type="primary">pqqB</name>
    <name type="ordered locus">XAC3114</name>
</gene>
<accession>Q8PHY4</accession>
<sequence length="299" mass="32541">MRIIVLGSAAGGGHPQWNCHTSASLRAWQQTDGAQRRTQASIAVSADGERWVLINASPDFRQQILATPALWPQHGLRHSPIEAVLLTSGEIDHIVGLLSMRESQRFSLHASSRVLDLLAQNPIFDAVNPHYVSRQPFALDTPLALCGLQLTPFSVPGKVPLFMESRSGGDLAGSNEETLGLTIDDGRRRMHYIPGCAAMTDALRARLQDAELVFFDGTLWRDDEMVQLGISQKTGQRMGHMSIDGPDGTIAAFAPLNVARKIFIHLNTTNPVLNTLSPEFASARASGWEVAHDGLEIAL</sequence>
<reference key="1">
    <citation type="journal article" date="2002" name="Nature">
        <title>Comparison of the genomes of two Xanthomonas pathogens with differing host specificities.</title>
        <authorList>
            <person name="da Silva A.C.R."/>
            <person name="Ferro J.A."/>
            <person name="Reinach F.C."/>
            <person name="Farah C.S."/>
            <person name="Furlan L.R."/>
            <person name="Quaggio R.B."/>
            <person name="Monteiro-Vitorello C.B."/>
            <person name="Van Sluys M.A."/>
            <person name="Almeida N.F. Jr."/>
            <person name="Alves L.M.C."/>
            <person name="do Amaral A.M."/>
            <person name="Bertolini M.C."/>
            <person name="Camargo L.E.A."/>
            <person name="Camarotte G."/>
            <person name="Cannavan F."/>
            <person name="Cardozo J."/>
            <person name="Chambergo F."/>
            <person name="Ciapina L.P."/>
            <person name="Cicarelli R.M.B."/>
            <person name="Coutinho L.L."/>
            <person name="Cursino-Santos J.R."/>
            <person name="El-Dorry H."/>
            <person name="Faria J.B."/>
            <person name="Ferreira A.J.S."/>
            <person name="Ferreira R.C.C."/>
            <person name="Ferro M.I.T."/>
            <person name="Formighieri E.F."/>
            <person name="Franco M.C."/>
            <person name="Greggio C.C."/>
            <person name="Gruber A."/>
            <person name="Katsuyama A.M."/>
            <person name="Kishi L.T."/>
            <person name="Leite R.P."/>
            <person name="Lemos E.G.M."/>
            <person name="Lemos M.V.F."/>
            <person name="Locali E.C."/>
            <person name="Machado M.A."/>
            <person name="Madeira A.M.B.N."/>
            <person name="Martinez-Rossi N.M."/>
            <person name="Martins E.C."/>
            <person name="Meidanis J."/>
            <person name="Menck C.F.M."/>
            <person name="Miyaki C.Y."/>
            <person name="Moon D.H."/>
            <person name="Moreira L.M."/>
            <person name="Novo M.T.M."/>
            <person name="Okura V.K."/>
            <person name="Oliveira M.C."/>
            <person name="Oliveira V.R."/>
            <person name="Pereira H.A."/>
            <person name="Rossi A."/>
            <person name="Sena J.A.D."/>
            <person name="Silva C."/>
            <person name="de Souza R.F."/>
            <person name="Spinola L.A.F."/>
            <person name="Takita M.A."/>
            <person name="Tamura R.E."/>
            <person name="Teixeira E.C."/>
            <person name="Tezza R.I.D."/>
            <person name="Trindade dos Santos M."/>
            <person name="Truffi D."/>
            <person name="Tsai S.M."/>
            <person name="White F.F."/>
            <person name="Setubal J.C."/>
            <person name="Kitajima J.P."/>
        </authorList>
    </citation>
    <scope>NUCLEOTIDE SEQUENCE [LARGE SCALE GENOMIC DNA]</scope>
    <source>
        <strain>306</strain>
    </source>
</reference>